<organism>
    <name type="scientific">Escherichia coli O6:K15:H31 (strain 536 / UPEC)</name>
    <dbReference type="NCBI Taxonomy" id="362663"/>
    <lineage>
        <taxon>Bacteria</taxon>
        <taxon>Pseudomonadati</taxon>
        <taxon>Pseudomonadota</taxon>
        <taxon>Gammaproteobacteria</taxon>
        <taxon>Enterobacterales</taxon>
        <taxon>Enterobacteriaceae</taxon>
        <taxon>Escherichia</taxon>
    </lineage>
</organism>
<protein>
    <recommendedName>
        <fullName evidence="1">Thiosulfate sulfurtransferase GlpE</fullName>
        <ecNumber evidence="1">2.8.1.1</ecNumber>
    </recommendedName>
</protein>
<sequence>MDQFECINVADAHQKLQEKEAVLVDIRDPQSFAMGHAAQAFHLTNDTLGAFMRDNDFDTPVMVMCYHGNSSKGAAQYLLQQGYDVVYSIDGGFEAWQRQFPAEVAYGA</sequence>
<keyword id="KW-0963">Cytoplasm</keyword>
<keyword id="KW-0808">Transferase</keyword>
<evidence type="ECO:0000255" key="1">
    <source>
        <dbReference type="HAMAP-Rule" id="MF_01009"/>
    </source>
</evidence>
<name>GLPE_ECOL5</name>
<accession>Q0TC43</accession>
<dbReference type="EC" id="2.8.1.1" evidence="1"/>
<dbReference type="EMBL" id="CP000247">
    <property type="protein sequence ID" value="ABG71486.1"/>
    <property type="molecule type" value="Genomic_DNA"/>
</dbReference>
<dbReference type="RefSeq" id="WP_000371924.1">
    <property type="nucleotide sequence ID" value="NC_008253.1"/>
</dbReference>
<dbReference type="SMR" id="Q0TC43"/>
<dbReference type="KEGG" id="ecp:ECP_3510"/>
<dbReference type="HOGENOM" id="CLU_089574_14_0_6"/>
<dbReference type="Proteomes" id="UP000009182">
    <property type="component" value="Chromosome"/>
</dbReference>
<dbReference type="GO" id="GO:0005737">
    <property type="term" value="C:cytoplasm"/>
    <property type="evidence" value="ECO:0007669"/>
    <property type="project" value="UniProtKB-SubCell"/>
</dbReference>
<dbReference type="GO" id="GO:0004792">
    <property type="term" value="F:thiosulfate-cyanide sulfurtransferase activity"/>
    <property type="evidence" value="ECO:0007669"/>
    <property type="project" value="UniProtKB-UniRule"/>
</dbReference>
<dbReference type="GO" id="GO:0006071">
    <property type="term" value="P:glycerol metabolic process"/>
    <property type="evidence" value="ECO:0007669"/>
    <property type="project" value="UniProtKB-UniRule"/>
</dbReference>
<dbReference type="CDD" id="cd01444">
    <property type="entry name" value="GlpE_ST"/>
    <property type="match status" value="1"/>
</dbReference>
<dbReference type="FunFam" id="3.40.250.10:FF:000007">
    <property type="entry name" value="Thiosulfate sulfurtransferase GlpE"/>
    <property type="match status" value="1"/>
</dbReference>
<dbReference type="Gene3D" id="3.40.250.10">
    <property type="entry name" value="Rhodanese-like domain"/>
    <property type="match status" value="1"/>
</dbReference>
<dbReference type="HAMAP" id="MF_01009">
    <property type="entry name" value="Thiosulf_sulfurtr"/>
    <property type="match status" value="1"/>
</dbReference>
<dbReference type="InterPro" id="IPR050229">
    <property type="entry name" value="GlpE_sulfurtransferase"/>
</dbReference>
<dbReference type="InterPro" id="IPR001763">
    <property type="entry name" value="Rhodanese-like_dom"/>
</dbReference>
<dbReference type="InterPro" id="IPR036873">
    <property type="entry name" value="Rhodanese-like_dom_sf"/>
</dbReference>
<dbReference type="InterPro" id="IPR023695">
    <property type="entry name" value="Thiosulf_sulfurTrfase"/>
</dbReference>
<dbReference type="NCBIfam" id="NF001195">
    <property type="entry name" value="PRK00162.1"/>
    <property type="match status" value="1"/>
</dbReference>
<dbReference type="PANTHER" id="PTHR43031">
    <property type="entry name" value="FAD-DEPENDENT OXIDOREDUCTASE"/>
    <property type="match status" value="1"/>
</dbReference>
<dbReference type="PANTHER" id="PTHR43031:SF6">
    <property type="entry name" value="THIOSULFATE SULFURTRANSFERASE GLPE"/>
    <property type="match status" value="1"/>
</dbReference>
<dbReference type="Pfam" id="PF00581">
    <property type="entry name" value="Rhodanese"/>
    <property type="match status" value="1"/>
</dbReference>
<dbReference type="SMART" id="SM00450">
    <property type="entry name" value="RHOD"/>
    <property type="match status" value="1"/>
</dbReference>
<dbReference type="SUPFAM" id="SSF52821">
    <property type="entry name" value="Rhodanese/Cell cycle control phosphatase"/>
    <property type="match status" value="1"/>
</dbReference>
<dbReference type="PROSITE" id="PS50206">
    <property type="entry name" value="RHODANESE_3"/>
    <property type="match status" value="1"/>
</dbReference>
<comment type="function">
    <text evidence="1">Transferase that catalyzes the transfer of sulfur from thiosulfate to thiophilic acceptors such as cyanide or dithiols. May function in a CysM-independent thiosulfate assimilation pathway by catalyzing the conversion of thiosulfate to sulfite, which can then be used for L-cysteine biosynthesis.</text>
</comment>
<comment type="catalytic activity">
    <reaction evidence="1">
        <text>thiosulfate + hydrogen cyanide = thiocyanate + sulfite + 2 H(+)</text>
        <dbReference type="Rhea" id="RHEA:16881"/>
        <dbReference type="ChEBI" id="CHEBI:15378"/>
        <dbReference type="ChEBI" id="CHEBI:17359"/>
        <dbReference type="ChEBI" id="CHEBI:18022"/>
        <dbReference type="ChEBI" id="CHEBI:18407"/>
        <dbReference type="ChEBI" id="CHEBI:33542"/>
        <dbReference type="EC" id="2.8.1.1"/>
    </reaction>
</comment>
<comment type="catalytic activity">
    <reaction evidence="1">
        <text>thiosulfate + [thioredoxin]-dithiol = [thioredoxin]-disulfide + hydrogen sulfide + sulfite + 2 H(+)</text>
        <dbReference type="Rhea" id="RHEA:83859"/>
        <dbReference type="Rhea" id="RHEA-COMP:10698"/>
        <dbReference type="Rhea" id="RHEA-COMP:10700"/>
        <dbReference type="ChEBI" id="CHEBI:15378"/>
        <dbReference type="ChEBI" id="CHEBI:17359"/>
        <dbReference type="ChEBI" id="CHEBI:29919"/>
        <dbReference type="ChEBI" id="CHEBI:29950"/>
        <dbReference type="ChEBI" id="CHEBI:33542"/>
        <dbReference type="ChEBI" id="CHEBI:50058"/>
    </reaction>
</comment>
<comment type="subcellular location">
    <subcellularLocation>
        <location evidence="1">Cytoplasm</location>
    </subcellularLocation>
</comment>
<comment type="similarity">
    <text evidence="1">Belongs to the GlpE family.</text>
</comment>
<gene>
    <name evidence="1" type="primary">glpE</name>
    <name type="ordered locus">ECP_3510</name>
</gene>
<reference key="1">
    <citation type="journal article" date="2006" name="Mol. Microbiol.">
        <title>Role of pathogenicity island-associated integrases in the genome plasticity of uropathogenic Escherichia coli strain 536.</title>
        <authorList>
            <person name="Hochhut B."/>
            <person name="Wilde C."/>
            <person name="Balling G."/>
            <person name="Middendorf B."/>
            <person name="Dobrindt U."/>
            <person name="Brzuszkiewicz E."/>
            <person name="Gottschalk G."/>
            <person name="Carniel E."/>
            <person name="Hacker J."/>
        </authorList>
    </citation>
    <scope>NUCLEOTIDE SEQUENCE [LARGE SCALE GENOMIC DNA]</scope>
    <source>
        <strain>536 / UPEC</strain>
    </source>
</reference>
<feature type="chain" id="PRO_1000062959" description="Thiosulfate sulfurtransferase GlpE">
    <location>
        <begin position="1"/>
        <end position="108"/>
    </location>
</feature>
<feature type="domain" description="Rhodanese" evidence="1">
    <location>
        <begin position="17"/>
        <end position="105"/>
    </location>
</feature>
<feature type="active site" description="Cysteine persulfide intermediate" evidence="1">
    <location>
        <position position="65"/>
    </location>
</feature>
<proteinExistence type="inferred from homology"/>